<reference key="1">
    <citation type="journal article" date="1994" name="Curr. Top. Microbiol. Immunol.">
        <title>Primer-directed sequencing of human papillomavirus types.</title>
        <authorList>
            <person name="Delius H."/>
            <person name="Hofmann B."/>
        </authorList>
    </citation>
    <scope>NUCLEOTIDE SEQUENCE [GENOMIC DNA]</scope>
</reference>
<gene>
    <name evidence="1" type="primary">E6</name>
</gene>
<organism>
    <name type="scientific">Human papillomavirus 3</name>
    <dbReference type="NCBI Taxonomy" id="10614"/>
    <lineage>
        <taxon>Viruses</taxon>
        <taxon>Monodnaviria</taxon>
        <taxon>Shotokuvirae</taxon>
        <taxon>Cossaviricota</taxon>
        <taxon>Papovaviricetes</taxon>
        <taxon>Zurhausenvirales</taxon>
        <taxon>Papillomaviridae</taxon>
        <taxon>Firstpapillomavirinae</taxon>
        <taxon>Alphapapillomavirus</taxon>
        <taxon>Alphapapillomavirus 2</taxon>
    </lineage>
</organism>
<name>VE6_HPV03</name>
<feature type="chain" id="PRO_0000133321" description="Protein E6">
    <location>
        <begin position="1"/>
        <end position="152"/>
    </location>
</feature>
<feature type="zinc finger region" evidence="1">
    <location>
        <begin position="33"/>
        <end position="69"/>
    </location>
</feature>
<feature type="zinc finger region" evidence="1">
    <location>
        <begin position="106"/>
        <end position="142"/>
    </location>
</feature>
<protein>
    <recommendedName>
        <fullName evidence="1">Protein E6</fullName>
    </recommendedName>
</protein>
<organismHost>
    <name type="scientific">Homo sapiens</name>
    <name type="common">Human</name>
    <dbReference type="NCBI Taxonomy" id="9606"/>
</organismHost>
<dbReference type="EMBL" id="X74462">
    <property type="protein sequence ID" value="CAA52469.1"/>
    <property type="molecule type" value="Genomic_DNA"/>
</dbReference>
<dbReference type="EMBL" id="X74462">
    <property type="protein sequence ID" value="CAA52470.1"/>
    <property type="status" value="ALT_INIT"/>
    <property type="molecule type" value="Genomic_DNA"/>
</dbReference>
<dbReference type="PIR" id="S36550">
    <property type="entry name" value="S36550"/>
</dbReference>
<dbReference type="SMR" id="P36799"/>
<dbReference type="IntAct" id="P36799">
    <property type="interactions" value="26"/>
</dbReference>
<dbReference type="MINT" id="P36799"/>
<dbReference type="Proteomes" id="UP000007706">
    <property type="component" value="Genome"/>
</dbReference>
<dbReference type="GO" id="GO:0030430">
    <property type="term" value="C:host cell cytoplasm"/>
    <property type="evidence" value="ECO:0007669"/>
    <property type="project" value="UniProtKB-SubCell"/>
</dbReference>
<dbReference type="GO" id="GO:0042025">
    <property type="term" value="C:host cell nucleus"/>
    <property type="evidence" value="ECO:0007669"/>
    <property type="project" value="UniProtKB-SubCell"/>
</dbReference>
<dbReference type="GO" id="GO:0003677">
    <property type="term" value="F:DNA binding"/>
    <property type="evidence" value="ECO:0007669"/>
    <property type="project" value="UniProtKB-UniRule"/>
</dbReference>
<dbReference type="GO" id="GO:0008270">
    <property type="term" value="F:zinc ion binding"/>
    <property type="evidence" value="ECO:0007669"/>
    <property type="project" value="UniProtKB-KW"/>
</dbReference>
<dbReference type="GO" id="GO:0006351">
    <property type="term" value="P:DNA-templated transcription"/>
    <property type="evidence" value="ECO:0007669"/>
    <property type="project" value="UniProtKB-UniRule"/>
</dbReference>
<dbReference type="GO" id="GO:0006355">
    <property type="term" value="P:regulation of DNA-templated transcription"/>
    <property type="evidence" value="ECO:0007669"/>
    <property type="project" value="UniProtKB-UniRule"/>
</dbReference>
<dbReference type="GO" id="GO:0052150">
    <property type="term" value="P:symbiont-mediated perturbation of host apoptosis"/>
    <property type="evidence" value="ECO:0007669"/>
    <property type="project" value="UniProtKB-KW"/>
</dbReference>
<dbReference type="GO" id="GO:0039648">
    <property type="term" value="P:symbiont-mediated perturbation of host ubiquitin-like protein modification"/>
    <property type="evidence" value="ECO:0007669"/>
    <property type="project" value="UniProtKB-UniRule"/>
</dbReference>
<dbReference type="GO" id="GO:0052170">
    <property type="term" value="P:symbiont-mediated suppression of host innate immune response"/>
    <property type="evidence" value="ECO:0007669"/>
    <property type="project" value="UniProtKB-KW"/>
</dbReference>
<dbReference type="GO" id="GO:0039502">
    <property type="term" value="P:symbiont-mediated suppression of host type I interferon-mediated signaling pathway"/>
    <property type="evidence" value="ECO:0007669"/>
    <property type="project" value="UniProtKB-UniRule"/>
</dbReference>
<dbReference type="Gene3D" id="3.30.240.40">
    <property type="entry name" value="E6 early regulatory protein"/>
    <property type="match status" value="2"/>
</dbReference>
<dbReference type="HAMAP" id="MF_04006">
    <property type="entry name" value="HPV_E6"/>
    <property type="match status" value="1"/>
</dbReference>
<dbReference type="InterPro" id="IPR001334">
    <property type="entry name" value="E6"/>
</dbReference>
<dbReference type="InterPro" id="IPR038575">
    <property type="entry name" value="E6_sf"/>
</dbReference>
<dbReference type="Pfam" id="PF00518">
    <property type="entry name" value="E6"/>
    <property type="match status" value="1"/>
</dbReference>
<dbReference type="SUPFAM" id="SSF161229">
    <property type="entry name" value="E6 C-terminal domain-like"/>
    <property type="match status" value="2"/>
</dbReference>
<keyword id="KW-0010">Activator</keyword>
<keyword id="KW-0238">DNA-binding</keyword>
<keyword id="KW-0244">Early protein</keyword>
<keyword id="KW-1035">Host cytoplasm</keyword>
<keyword id="KW-1048">Host nucleus</keyword>
<keyword id="KW-0945">Host-virus interaction</keyword>
<keyword id="KW-1090">Inhibition of host innate immune response by virus</keyword>
<keyword id="KW-0479">Metal-binding</keyword>
<keyword id="KW-1119">Modulation of host cell apoptosis by virus</keyword>
<keyword id="KW-0804">Transcription</keyword>
<keyword id="KW-0805">Transcription regulation</keyword>
<keyword id="KW-0899">Viral immunoevasion</keyword>
<keyword id="KW-0862">Zinc</keyword>
<keyword id="KW-0863">Zinc-finger</keyword>
<sequence>MAVAMSMDANCPKNIFLLCRNTGIGFDDLRLHCIFCTKQLTTTELQAFALRELNVVWRRGAPYGACARCLLVEGIARRLKYWEYSYYVSGVEEETKQSIDTQQIRCYMCHKPLVKEEKDRHRNEKRRLHKISGHWRGSCQYCWSRCTVRIPR</sequence>
<accession>P36799</accession>
<accession>Q81960</accession>
<comment type="function">
    <text evidence="1">Plays a major role in the induction and maintenance of cellular transformation. E6 associates with host UBE3A/E6-AP ubiquitin-protein ligase and modulates its activity. Sequesters tumor suppressor TP53 in the host cytoplasm and modulates its activity by interacting with host EP300 that results in the reduction of TP53 acetylation and activation. In turn, apoptosis induced by DNA damage is inhibited. E6 also protects host keratinocytes from apoptosis by mediating the degradation of host BAK1. May also inhibit host immune response.</text>
</comment>
<comment type="subunit">
    <text evidence="1">Forms homodimers. Interacts with ubiquitin-protein ligase UBE3A/E6-AP; this interaction stimulates UBE3A ubiquitin activity. Interacts with host TP53 and EP300; this interaction inhibits TP53 activity.</text>
</comment>
<comment type="interaction">
    <interactant intactId="EBI-7363822">
        <id>P36799</id>
    </interactant>
    <interactant intactId="EBI-357481">
        <id>Q12959</id>
        <label>DLG1</label>
    </interactant>
    <organismsDiffer>true</organismsDiffer>
    <experiments>2</experiments>
</comment>
<comment type="interaction">
    <interactant intactId="EBI-7363822">
        <id>P36799</id>
    </interactant>
    <interactant intactId="EBI-954357">
        <id>Q05086</id>
        <label>UBE3A</label>
    </interactant>
    <organismsDiffer>true</organismsDiffer>
    <experiments>2</experiments>
</comment>
<comment type="subcellular location">
    <subcellularLocation>
        <location evidence="1">Host cytoplasm</location>
    </subcellularLocation>
    <subcellularLocation>
        <location evidence="1">Host nucleus</location>
    </subcellularLocation>
</comment>
<comment type="miscellaneous">
    <text evidence="1">Belongs to the low risk human alphapapillomavirus family. The cancer-causing human papillomavirus E6 protein has a unique carboxy terminal PDZ domain containing substrate but low risk E6s do not possess this domain.</text>
</comment>
<comment type="similarity">
    <text evidence="2">Belongs to the papillomaviridae E6 protein family.</text>
</comment>
<comment type="caution">
    <text evidence="2">It is uncertain whether Met-1 or Met-5 is the initiator.</text>
</comment>
<comment type="sequence caution" evidence="2">
    <conflict type="erroneous initiation">
        <sequence resource="EMBL-CDS" id="CAA52470"/>
    </conflict>
</comment>
<proteinExistence type="evidence at protein level"/>
<evidence type="ECO:0000255" key="1">
    <source>
        <dbReference type="HAMAP-Rule" id="MF_04006"/>
    </source>
</evidence>
<evidence type="ECO:0000305" key="2"/>